<protein>
    <recommendedName>
        <fullName>Putative peptide import ATP-binding protein BruAb2_1034</fullName>
        <ecNumber>7.4.2.-</ecNumber>
    </recommendedName>
</protein>
<accession>Q8VQK7</accession>
<accession>Q576M4</accession>
<name>Y1034_BRUAB</name>
<organism>
    <name type="scientific">Brucella abortus biovar 1 (strain 9-941)</name>
    <dbReference type="NCBI Taxonomy" id="262698"/>
    <lineage>
        <taxon>Bacteria</taxon>
        <taxon>Pseudomonadati</taxon>
        <taxon>Pseudomonadota</taxon>
        <taxon>Alphaproteobacteria</taxon>
        <taxon>Hyphomicrobiales</taxon>
        <taxon>Brucellaceae</taxon>
        <taxon>Brucella/Ochrobactrum group</taxon>
        <taxon>Brucella</taxon>
    </lineage>
</organism>
<feature type="chain" id="PRO_0000290157" description="Putative peptide import ATP-binding protein BruAb2_1034">
    <location>
        <begin position="1"/>
        <end position="334"/>
    </location>
</feature>
<feature type="domain" description="ABC transporter" evidence="2">
    <location>
        <begin position="22"/>
        <end position="272"/>
    </location>
</feature>
<feature type="binding site" evidence="2">
    <location>
        <begin position="64"/>
        <end position="71"/>
    </location>
    <ligand>
        <name>ATP</name>
        <dbReference type="ChEBI" id="CHEBI:30616"/>
    </ligand>
</feature>
<dbReference type="EC" id="7.4.2.-"/>
<dbReference type="EMBL" id="AF454951">
    <property type="protein sequence ID" value="AAL59342.1"/>
    <property type="molecule type" value="Genomic_DNA"/>
</dbReference>
<dbReference type="EMBL" id="AE017224">
    <property type="protein sequence ID" value="AAX76410.1"/>
    <property type="molecule type" value="Genomic_DNA"/>
</dbReference>
<dbReference type="RefSeq" id="WP_002968911.1">
    <property type="nucleotide sequence ID" value="NC_006933.1"/>
</dbReference>
<dbReference type="SMR" id="Q8VQK7"/>
<dbReference type="EnsemblBacteria" id="AAX76410">
    <property type="protein sequence ID" value="AAX76410"/>
    <property type="gene ID" value="BruAb2_1034"/>
</dbReference>
<dbReference type="KEGG" id="bmb:BruAb2_1034"/>
<dbReference type="HOGENOM" id="CLU_000604_1_23_5"/>
<dbReference type="Proteomes" id="UP000000540">
    <property type="component" value="Chromosome II"/>
</dbReference>
<dbReference type="GO" id="GO:0005886">
    <property type="term" value="C:plasma membrane"/>
    <property type="evidence" value="ECO:0007669"/>
    <property type="project" value="UniProtKB-SubCell"/>
</dbReference>
<dbReference type="GO" id="GO:0005524">
    <property type="term" value="F:ATP binding"/>
    <property type="evidence" value="ECO:0007669"/>
    <property type="project" value="UniProtKB-KW"/>
</dbReference>
<dbReference type="GO" id="GO:0016887">
    <property type="term" value="F:ATP hydrolysis activity"/>
    <property type="evidence" value="ECO:0007669"/>
    <property type="project" value="InterPro"/>
</dbReference>
<dbReference type="GO" id="GO:0015833">
    <property type="term" value="P:peptide transport"/>
    <property type="evidence" value="ECO:0007669"/>
    <property type="project" value="UniProtKB-KW"/>
</dbReference>
<dbReference type="GO" id="GO:0015031">
    <property type="term" value="P:protein transport"/>
    <property type="evidence" value="ECO:0007669"/>
    <property type="project" value="UniProtKB-KW"/>
</dbReference>
<dbReference type="GO" id="GO:0055085">
    <property type="term" value="P:transmembrane transport"/>
    <property type="evidence" value="ECO:0007669"/>
    <property type="project" value="UniProtKB-ARBA"/>
</dbReference>
<dbReference type="CDD" id="cd03257">
    <property type="entry name" value="ABC_NikE_OppD_transporters"/>
    <property type="match status" value="1"/>
</dbReference>
<dbReference type="FunFam" id="3.40.50.300:FF:000016">
    <property type="entry name" value="Oligopeptide ABC transporter ATP-binding component"/>
    <property type="match status" value="1"/>
</dbReference>
<dbReference type="Gene3D" id="3.40.50.300">
    <property type="entry name" value="P-loop containing nucleotide triphosphate hydrolases"/>
    <property type="match status" value="1"/>
</dbReference>
<dbReference type="InterPro" id="IPR003593">
    <property type="entry name" value="AAA+_ATPase"/>
</dbReference>
<dbReference type="InterPro" id="IPR050319">
    <property type="entry name" value="ABC_transp_ATP-bind"/>
</dbReference>
<dbReference type="InterPro" id="IPR003439">
    <property type="entry name" value="ABC_transporter-like_ATP-bd"/>
</dbReference>
<dbReference type="InterPro" id="IPR017871">
    <property type="entry name" value="ABC_transporter-like_CS"/>
</dbReference>
<dbReference type="InterPro" id="IPR013563">
    <property type="entry name" value="Oligopep_ABC_C"/>
</dbReference>
<dbReference type="InterPro" id="IPR027417">
    <property type="entry name" value="P-loop_NTPase"/>
</dbReference>
<dbReference type="NCBIfam" id="TIGR01727">
    <property type="entry name" value="oligo_HPY"/>
    <property type="match status" value="1"/>
</dbReference>
<dbReference type="PANTHER" id="PTHR43776:SF7">
    <property type="entry name" value="D,D-DIPEPTIDE TRANSPORT ATP-BINDING PROTEIN DDPF-RELATED"/>
    <property type="match status" value="1"/>
</dbReference>
<dbReference type="PANTHER" id="PTHR43776">
    <property type="entry name" value="TRANSPORT ATP-BINDING PROTEIN"/>
    <property type="match status" value="1"/>
</dbReference>
<dbReference type="Pfam" id="PF00005">
    <property type="entry name" value="ABC_tran"/>
    <property type="match status" value="1"/>
</dbReference>
<dbReference type="Pfam" id="PF08352">
    <property type="entry name" value="oligo_HPY"/>
    <property type="match status" value="1"/>
</dbReference>
<dbReference type="SMART" id="SM00382">
    <property type="entry name" value="AAA"/>
    <property type="match status" value="1"/>
</dbReference>
<dbReference type="SUPFAM" id="SSF52540">
    <property type="entry name" value="P-loop containing nucleoside triphosphate hydrolases"/>
    <property type="match status" value="1"/>
</dbReference>
<dbReference type="PROSITE" id="PS00211">
    <property type="entry name" value="ABC_TRANSPORTER_1"/>
    <property type="match status" value="1"/>
</dbReference>
<dbReference type="PROSITE" id="PS50893">
    <property type="entry name" value="ABC_TRANSPORTER_2"/>
    <property type="match status" value="1"/>
</dbReference>
<reference key="1">
    <citation type="submission" date="2001-12" db="EMBL/GenBank/DDBJ databases">
        <title>Tn1953, a new element from Brucella abortus.</title>
        <authorList>
            <person name="Bricker B.J."/>
        </authorList>
    </citation>
    <scope>NUCLEOTIDE SEQUENCE [GENOMIC DNA]</scope>
    <source>
        <strain>544 / Biovar 1</strain>
    </source>
</reference>
<reference key="2">
    <citation type="journal article" date="2005" name="J. Bacteriol.">
        <title>Completion of the genome sequence of Brucella abortus and comparison to the highly similar genomes of Brucella melitensis and Brucella suis.</title>
        <authorList>
            <person name="Halling S.M."/>
            <person name="Peterson-Burch B.D."/>
            <person name="Bricker B.J."/>
            <person name="Zuerner R.L."/>
            <person name="Qing Z."/>
            <person name="Li L.-L."/>
            <person name="Kapur V."/>
            <person name="Alt D.P."/>
            <person name="Olsen S.C."/>
        </authorList>
    </citation>
    <scope>NUCLEOTIDE SEQUENCE [LARGE SCALE GENOMIC DNA]</scope>
    <source>
        <strain>9-941</strain>
    </source>
</reference>
<comment type="function">
    <text evidence="1">Probably part of an ABC transporter complex that could be involved in peptide import. Probably responsible for energy coupling to the transport system (By similarity).</text>
</comment>
<comment type="subunit">
    <text evidence="3">The complex is composed of two ATP-binding proteins (BruAb2_1033 and BruAb2_1034), two transmembrane proteins (BruAb2_1031 and BruAb2_1032) and a solute-binding protein (BruAb2_1030).</text>
</comment>
<comment type="subcellular location">
    <subcellularLocation>
        <location evidence="3">Cell inner membrane</location>
        <topology evidence="3">Peripheral membrane protein</topology>
    </subcellularLocation>
</comment>
<comment type="similarity">
    <text evidence="3">Belongs to the ABC transporter superfamily.</text>
</comment>
<sequence>MSDVMTANRRSFLAEDGKETIVRTDDLVRDFDLGHRPEGGRLVLRAVDKVSLTIRRGETLGLVGESGSGKSTIGRMLVGLLPYTSGNIELFGQKIEPRAKAAAWKPLRRRVQFVFQDPHAALNPRMRVGTAIAEPLDVAGNLTRKERSARVDELMELVGLPTSFARRFPHEFSGGQRQRIVIARALALNPEILVCDEAVASLDVSMQAQIVNLLKDLQDQLGLSYLFIAHDLAVVRAVSHRVAVLYAGQIVETGPRTALYSDPLHPYSRALLDSVPRARRGAPRSIIAGEVPSLLNKPKGCAFCPRCPKAMDICRDVPPPLRVIGDREVACHLY</sequence>
<evidence type="ECO:0000250" key="1"/>
<evidence type="ECO:0000255" key="2">
    <source>
        <dbReference type="PROSITE-ProRule" id="PRU00434"/>
    </source>
</evidence>
<evidence type="ECO:0000305" key="3"/>
<gene>
    <name type="ordered locus">BruAb2_1034</name>
</gene>
<keyword id="KW-0067">ATP-binding</keyword>
<keyword id="KW-0997">Cell inner membrane</keyword>
<keyword id="KW-1003">Cell membrane</keyword>
<keyword id="KW-0472">Membrane</keyword>
<keyword id="KW-0547">Nucleotide-binding</keyword>
<keyword id="KW-0571">Peptide transport</keyword>
<keyword id="KW-0653">Protein transport</keyword>
<keyword id="KW-1278">Translocase</keyword>
<keyword id="KW-0813">Transport</keyword>
<proteinExistence type="inferred from homology"/>